<name>GRCA_KLEP7</name>
<evidence type="ECO:0000255" key="1">
    <source>
        <dbReference type="HAMAP-Rule" id="MF_00806"/>
    </source>
</evidence>
<organism>
    <name type="scientific">Klebsiella pneumoniae subsp. pneumoniae (strain ATCC 700721 / MGH 78578)</name>
    <dbReference type="NCBI Taxonomy" id="272620"/>
    <lineage>
        <taxon>Bacteria</taxon>
        <taxon>Pseudomonadati</taxon>
        <taxon>Pseudomonadota</taxon>
        <taxon>Gammaproteobacteria</taxon>
        <taxon>Enterobacterales</taxon>
        <taxon>Enterobacteriaceae</taxon>
        <taxon>Klebsiella/Raoultella group</taxon>
        <taxon>Klebsiella</taxon>
        <taxon>Klebsiella pneumoniae complex</taxon>
    </lineage>
</organism>
<comment type="function">
    <text evidence="1">Acts as a radical domain for damaged PFL and possibly other radical proteins.</text>
</comment>
<accession>A6TCJ1</accession>
<dbReference type="EMBL" id="CP000647">
    <property type="protein sequence ID" value="ABR78312.1"/>
    <property type="molecule type" value="Genomic_DNA"/>
</dbReference>
<dbReference type="RefSeq" id="WP_002914084.1">
    <property type="nucleotide sequence ID" value="NC_009648.1"/>
</dbReference>
<dbReference type="SMR" id="A6TCJ1"/>
<dbReference type="STRING" id="272620.KPN_02902"/>
<dbReference type="jPOST" id="A6TCJ1"/>
<dbReference type="PaxDb" id="272620-KPN_02902"/>
<dbReference type="EnsemblBacteria" id="ABR78312">
    <property type="protein sequence ID" value="ABR78312"/>
    <property type="gene ID" value="KPN_02902"/>
</dbReference>
<dbReference type="GeneID" id="93313319"/>
<dbReference type="KEGG" id="kpn:KPN_02902"/>
<dbReference type="HOGENOM" id="CLU_133780_0_0_6"/>
<dbReference type="Proteomes" id="UP000000265">
    <property type="component" value="Chromosome"/>
</dbReference>
<dbReference type="GO" id="GO:0005829">
    <property type="term" value="C:cytosol"/>
    <property type="evidence" value="ECO:0007669"/>
    <property type="project" value="TreeGrafter"/>
</dbReference>
<dbReference type="GO" id="GO:0008861">
    <property type="term" value="F:formate C-acetyltransferase activity"/>
    <property type="evidence" value="ECO:0007669"/>
    <property type="project" value="TreeGrafter"/>
</dbReference>
<dbReference type="FunFam" id="3.20.70.20:FF:000002">
    <property type="entry name" value="Autonomous glycyl radical cofactor"/>
    <property type="match status" value="1"/>
</dbReference>
<dbReference type="Gene3D" id="3.20.70.20">
    <property type="match status" value="1"/>
</dbReference>
<dbReference type="HAMAP" id="MF_00806">
    <property type="entry name" value="GrcA"/>
    <property type="match status" value="1"/>
</dbReference>
<dbReference type="InterPro" id="IPR050244">
    <property type="entry name" value="Auton_GlycylRad_Cofactor"/>
</dbReference>
<dbReference type="InterPro" id="IPR019777">
    <property type="entry name" value="Form_AcTrfase_GR_CS"/>
</dbReference>
<dbReference type="InterPro" id="IPR001150">
    <property type="entry name" value="Gly_radical"/>
</dbReference>
<dbReference type="InterPro" id="IPR011140">
    <property type="entry name" value="Glycyl_radical_cofactor_GrcA"/>
</dbReference>
<dbReference type="NCBIfam" id="TIGR04365">
    <property type="entry name" value="spare_glycyl"/>
    <property type="match status" value="1"/>
</dbReference>
<dbReference type="PANTHER" id="PTHR30191">
    <property type="entry name" value="FORMATE ACETYLTRANSFERASE"/>
    <property type="match status" value="1"/>
</dbReference>
<dbReference type="PANTHER" id="PTHR30191:SF0">
    <property type="entry name" value="FORMATE ACETYLTRANSFERASE 1"/>
    <property type="match status" value="1"/>
</dbReference>
<dbReference type="Pfam" id="PF01228">
    <property type="entry name" value="Gly_radical"/>
    <property type="match status" value="1"/>
</dbReference>
<dbReference type="PIRSF" id="PIRSF000378">
    <property type="entry name" value="Gly_radicl_yfiD"/>
    <property type="match status" value="1"/>
</dbReference>
<dbReference type="SUPFAM" id="SSF51998">
    <property type="entry name" value="PFL-like glycyl radical enzymes"/>
    <property type="match status" value="1"/>
</dbReference>
<dbReference type="PROSITE" id="PS00850">
    <property type="entry name" value="GLY_RADICAL_1"/>
    <property type="match status" value="1"/>
</dbReference>
<dbReference type="PROSITE" id="PS51149">
    <property type="entry name" value="GLY_RADICAL_2"/>
    <property type="match status" value="1"/>
</dbReference>
<sequence length="127" mass="14243">MITGIQITKAANDDLLNSFWLLDSEKGEARCLCAKGGFAEDDVVAVSKLGEIEYREIPVDVKPEVRVEGGQHLNVNVLRRETLLDAVEHPEKYPQLTIRVSGYAVRFNSLTPEQQRDVIARTFTESL</sequence>
<gene>
    <name evidence="1" type="primary">grcA</name>
    <name type="ordered locus">KPN78578_28510</name>
    <name type="ORF">KPN_02902</name>
</gene>
<feature type="chain" id="PRO_1000083728" description="Autonomous glycyl radical cofactor">
    <location>
        <begin position="1"/>
        <end position="127"/>
    </location>
</feature>
<feature type="domain" description="Glycine radical" evidence="1">
    <location>
        <begin position="5"/>
        <end position="127"/>
    </location>
</feature>
<feature type="modified residue" description="Glycine radical" evidence="1">
    <location>
        <position position="102"/>
    </location>
</feature>
<keyword id="KW-0556">Organic radical</keyword>
<reference key="1">
    <citation type="submission" date="2006-09" db="EMBL/GenBank/DDBJ databases">
        <authorList>
            <consortium name="The Klebsiella pneumonia Genome Sequencing Project"/>
            <person name="McClelland M."/>
            <person name="Sanderson E.K."/>
            <person name="Spieth J."/>
            <person name="Clifton W.S."/>
            <person name="Latreille P."/>
            <person name="Sabo A."/>
            <person name="Pepin K."/>
            <person name="Bhonagiri V."/>
            <person name="Porwollik S."/>
            <person name="Ali J."/>
            <person name="Wilson R.K."/>
        </authorList>
    </citation>
    <scope>NUCLEOTIDE SEQUENCE [LARGE SCALE GENOMIC DNA]</scope>
    <source>
        <strain>ATCC 700721 / MGH 78578</strain>
    </source>
</reference>
<proteinExistence type="inferred from homology"/>
<protein>
    <recommendedName>
        <fullName evidence="1">Autonomous glycyl radical cofactor</fullName>
    </recommendedName>
</protein>